<comment type="function">
    <text evidence="1">Mitochondrial RNA-binding protein that has a role in mitochondrial translation.</text>
</comment>
<comment type="subunit">
    <text evidence="1">Component of the mitochondrial ribosome small subunit (28S) which comprises a 12S rRNA and about 30 distinct proteins. Associated with the 12S mitochondrial rRNA (12S mt-rRNA) (By similarity).</text>
</comment>
<comment type="subcellular location">
    <subcellularLocation>
        <location evidence="1">Mitochondrion</location>
    </subcellularLocation>
</comment>
<comment type="similarity">
    <text evidence="5">Belongs to the mitochondrion-specific ribosomal protein mS39 family.</text>
</comment>
<organism>
    <name type="scientific">Bos taurus</name>
    <name type="common">Bovine</name>
    <dbReference type="NCBI Taxonomy" id="9913"/>
    <lineage>
        <taxon>Eukaryota</taxon>
        <taxon>Metazoa</taxon>
        <taxon>Chordata</taxon>
        <taxon>Craniata</taxon>
        <taxon>Vertebrata</taxon>
        <taxon>Euteleostomi</taxon>
        <taxon>Mammalia</taxon>
        <taxon>Eutheria</taxon>
        <taxon>Laurasiatheria</taxon>
        <taxon>Artiodactyla</taxon>
        <taxon>Ruminantia</taxon>
        <taxon>Pecora</taxon>
        <taxon>Bovidae</taxon>
        <taxon>Bovinae</taxon>
        <taxon>Bos</taxon>
    </lineage>
</organism>
<evidence type="ECO:0000250" key="1"/>
<evidence type="ECO:0000250" key="2">
    <source>
        <dbReference type="UniProtKB" id="Q96EY7"/>
    </source>
</evidence>
<evidence type="ECO:0000255" key="3"/>
<evidence type="ECO:0000256" key="4">
    <source>
        <dbReference type="SAM" id="MobiDB-lite"/>
    </source>
</evidence>
<evidence type="ECO:0000305" key="5"/>
<evidence type="ECO:0007829" key="6">
    <source>
        <dbReference type="PDB" id="6NEQ"/>
    </source>
</evidence>
<evidence type="ECO:0007829" key="7">
    <source>
        <dbReference type="PDB" id="6NF8"/>
    </source>
</evidence>
<gene>
    <name type="primary">PTCD3</name>
    <name type="synonym">MRPS39</name>
</gene>
<feature type="transit peptide" description="Mitochondrion" evidence="3">
    <location>
        <begin position="1"/>
        <end position="37"/>
    </location>
</feature>
<feature type="chain" id="PRO_0000305027" description="Small ribosomal subunit protein mS39">
    <location>
        <begin position="38"/>
        <end position="688"/>
    </location>
</feature>
<feature type="repeat" description="PPR 1">
    <location>
        <begin position="149"/>
        <end position="183"/>
    </location>
</feature>
<feature type="repeat" description="PPR 2">
    <location>
        <begin position="184"/>
        <end position="219"/>
    </location>
</feature>
<feature type="repeat" description="PPR 3">
    <location>
        <begin position="258"/>
        <end position="292"/>
    </location>
</feature>
<feature type="repeat" description="PPR 4">
    <location>
        <begin position="293"/>
        <end position="333"/>
    </location>
</feature>
<feature type="repeat" description="PPR 5">
    <location>
        <begin position="334"/>
        <end position="370"/>
    </location>
</feature>
<feature type="repeat" description="PPR 6">
    <location>
        <begin position="371"/>
        <end position="412"/>
    </location>
</feature>
<feature type="repeat" description="PPR 7">
    <location>
        <begin position="415"/>
        <end position="449"/>
    </location>
</feature>
<feature type="repeat" description="PPR 8">
    <location>
        <begin position="457"/>
        <end position="491"/>
    </location>
</feature>
<feature type="repeat" description="PPR 9">
    <location>
        <begin position="492"/>
        <end position="526"/>
    </location>
</feature>
<feature type="repeat" description="PPR 10">
    <location>
        <begin position="575"/>
        <end position="609"/>
    </location>
</feature>
<feature type="region of interest" description="Disordered" evidence="4">
    <location>
        <begin position="667"/>
        <end position="688"/>
    </location>
</feature>
<feature type="modified residue" description="N6-acetyllysine" evidence="2">
    <location>
        <position position="126"/>
    </location>
</feature>
<feature type="helix" evidence="6">
    <location>
        <begin position="70"/>
        <end position="77"/>
    </location>
</feature>
<feature type="strand" evidence="6">
    <location>
        <begin position="87"/>
        <end position="89"/>
    </location>
</feature>
<feature type="turn" evidence="7">
    <location>
        <begin position="93"/>
        <end position="95"/>
    </location>
</feature>
<feature type="helix" evidence="6">
    <location>
        <begin position="100"/>
        <end position="122"/>
    </location>
</feature>
<feature type="helix" evidence="6">
    <location>
        <begin position="125"/>
        <end position="128"/>
    </location>
</feature>
<feature type="strand" evidence="6">
    <location>
        <begin position="137"/>
        <end position="141"/>
    </location>
</feature>
<feature type="helix" evidence="6">
    <location>
        <begin position="145"/>
        <end position="154"/>
    </location>
</feature>
<feature type="helix" evidence="6">
    <location>
        <begin position="157"/>
        <end position="167"/>
    </location>
</feature>
<feature type="helix" evidence="6">
    <location>
        <begin position="171"/>
        <end position="180"/>
    </location>
</feature>
<feature type="helix" evidence="6">
    <location>
        <begin position="184"/>
        <end position="188"/>
    </location>
</feature>
<feature type="helix" evidence="6">
    <location>
        <begin position="283"/>
        <end position="288"/>
    </location>
</feature>
<feature type="helix" evidence="6">
    <location>
        <begin position="291"/>
        <end position="303"/>
    </location>
</feature>
<feature type="helix" evidence="6">
    <location>
        <begin position="306"/>
        <end position="317"/>
    </location>
</feature>
<feature type="helix" evidence="6">
    <location>
        <begin position="320"/>
        <end position="327"/>
    </location>
</feature>
<feature type="helix" evidence="6">
    <location>
        <begin position="336"/>
        <end position="344"/>
    </location>
</feature>
<feature type="helix" evidence="6">
    <location>
        <begin position="348"/>
        <end position="355"/>
    </location>
</feature>
<feature type="turn" evidence="6">
    <location>
        <begin position="356"/>
        <end position="358"/>
    </location>
</feature>
<feature type="helix" evidence="6">
    <location>
        <begin position="362"/>
        <end position="369"/>
    </location>
</feature>
<feature type="turn" evidence="6">
    <location>
        <begin position="372"/>
        <end position="375"/>
    </location>
</feature>
<feature type="helix" evidence="6">
    <location>
        <begin position="376"/>
        <end position="382"/>
    </location>
</feature>
<feature type="helix" evidence="6">
    <location>
        <begin position="407"/>
        <end position="415"/>
    </location>
</feature>
<feature type="helix" evidence="6">
    <location>
        <begin position="418"/>
        <end position="429"/>
    </location>
</feature>
<feature type="helix" evidence="6">
    <location>
        <begin position="433"/>
        <end position="439"/>
    </location>
</feature>
<feature type="strand" evidence="6">
    <location>
        <begin position="453"/>
        <end position="455"/>
    </location>
</feature>
<feature type="helix" evidence="6">
    <location>
        <begin position="461"/>
        <end position="466"/>
    </location>
</feature>
<feature type="helix" evidence="6">
    <location>
        <begin position="468"/>
        <end position="470"/>
    </location>
</feature>
<feature type="helix" evidence="6">
    <location>
        <begin position="474"/>
        <end position="484"/>
    </location>
</feature>
<feature type="turn" evidence="6">
    <location>
        <begin position="485"/>
        <end position="488"/>
    </location>
</feature>
<feature type="helix" evidence="6">
    <location>
        <begin position="493"/>
        <end position="506"/>
    </location>
</feature>
<feature type="helix" evidence="6">
    <location>
        <begin position="512"/>
        <end position="521"/>
    </location>
</feature>
<feature type="strand" evidence="6">
    <location>
        <begin position="524"/>
        <end position="526"/>
    </location>
</feature>
<feature type="turn" evidence="6">
    <location>
        <begin position="527"/>
        <end position="530"/>
    </location>
</feature>
<feature type="helix" evidence="6">
    <location>
        <begin position="531"/>
        <end position="536"/>
    </location>
</feature>
<feature type="turn" evidence="6">
    <location>
        <begin position="537"/>
        <end position="540"/>
    </location>
</feature>
<feature type="helix" evidence="6">
    <location>
        <begin position="545"/>
        <end position="547"/>
    </location>
</feature>
<feature type="helix" evidence="6">
    <location>
        <begin position="550"/>
        <end position="559"/>
    </location>
</feature>
<feature type="helix" evidence="6">
    <location>
        <begin position="582"/>
        <end position="587"/>
    </location>
</feature>
<feature type="helix" evidence="6">
    <location>
        <begin position="593"/>
        <end position="601"/>
    </location>
</feature>
<feature type="strand" evidence="6">
    <location>
        <begin position="604"/>
        <end position="606"/>
    </location>
</feature>
<feature type="turn" evidence="6">
    <location>
        <begin position="613"/>
        <end position="616"/>
    </location>
</feature>
<feature type="turn" evidence="6">
    <location>
        <begin position="625"/>
        <end position="627"/>
    </location>
</feature>
<feature type="helix" evidence="6">
    <location>
        <begin position="628"/>
        <end position="640"/>
    </location>
</feature>
<keyword id="KW-0002">3D-structure</keyword>
<keyword id="KW-0007">Acetylation</keyword>
<keyword id="KW-0496">Mitochondrion</keyword>
<keyword id="KW-1185">Reference proteome</keyword>
<keyword id="KW-0677">Repeat</keyword>
<keyword id="KW-0687">Ribonucleoprotein</keyword>
<keyword id="KW-0689">Ribosomal protein</keyword>
<keyword id="KW-0694">RNA-binding</keyword>
<keyword id="KW-0699">rRNA-binding</keyword>
<keyword id="KW-0809">Transit peptide</keyword>
<keyword id="KW-0810">Translation regulation</keyword>
<name>PTCD3_BOVIN</name>
<proteinExistence type="evidence at protein level"/>
<accession>Q2KI62</accession>
<reference key="1">
    <citation type="submission" date="2006-01" db="EMBL/GenBank/DDBJ databases">
        <authorList>
            <consortium name="NIH - Mammalian Gene Collection (MGC) project"/>
        </authorList>
    </citation>
    <scope>NUCLEOTIDE SEQUENCE [LARGE SCALE MRNA]</scope>
    <source>
        <strain>Hereford</strain>
        <tissue>Heart ventricle</tissue>
    </source>
</reference>
<dbReference type="EMBL" id="BC112757">
    <property type="protein sequence ID" value="AAI12758.1"/>
    <property type="molecule type" value="mRNA"/>
</dbReference>
<dbReference type="RefSeq" id="NP_001039499.1">
    <property type="nucleotide sequence ID" value="NM_001046034.1"/>
</dbReference>
<dbReference type="PDB" id="3JD5">
    <property type="method" value="EM"/>
    <property type="resolution" value="7.00 A"/>
    <property type="chains" value="o=1-688"/>
</dbReference>
<dbReference type="PDB" id="6NEQ">
    <property type="method" value="EM"/>
    <property type="resolution" value="3.32 A"/>
    <property type="chains" value="o=1-688"/>
</dbReference>
<dbReference type="PDB" id="6NF8">
    <property type="method" value="EM"/>
    <property type="resolution" value="3.48 A"/>
    <property type="chains" value="o=1-688"/>
</dbReference>
<dbReference type="PDBsum" id="3JD5"/>
<dbReference type="PDBsum" id="6NEQ"/>
<dbReference type="PDBsum" id="6NF8"/>
<dbReference type="EMDB" id="EMD-9358"/>
<dbReference type="EMDB" id="EMD-9362"/>
<dbReference type="SMR" id="Q2KI62"/>
<dbReference type="FunCoup" id="Q2KI62">
    <property type="interactions" value="2880"/>
</dbReference>
<dbReference type="IntAct" id="Q2KI62">
    <property type="interactions" value="29"/>
</dbReference>
<dbReference type="STRING" id="9913.ENSBTAP00000008498"/>
<dbReference type="PaxDb" id="9913-ENSBTAP00000008498"/>
<dbReference type="Ensembl" id="ENSBTAT00000008498.5">
    <property type="protein sequence ID" value="ENSBTAP00000008498.3"/>
    <property type="gene ID" value="ENSBTAG00000006482.5"/>
</dbReference>
<dbReference type="GeneID" id="509502"/>
<dbReference type="KEGG" id="bta:509502"/>
<dbReference type="CTD" id="55037"/>
<dbReference type="VEuPathDB" id="HostDB:ENSBTAG00000006482"/>
<dbReference type="VGNC" id="VGNC:33491">
    <property type="gene designation" value="PTCD3"/>
</dbReference>
<dbReference type="eggNOG" id="KOG4422">
    <property type="taxonomic scope" value="Eukaryota"/>
</dbReference>
<dbReference type="GeneTree" id="ENSGT00390000016876"/>
<dbReference type="HOGENOM" id="CLU_026264_0_1_1"/>
<dbReference type="InParanoid" id="Q2KI62"/>
<dbReference type="OMA" id="FMHQEAQ"/>
<dbReference type="OrthoDB" id="185373at2759"/>
<dbReference type="TreeFam" id="TF320158"/>
<dbReference type="Reactome" id="R-BTA-5389840">
    <property type="pathway name" value="Mitochondrial translation elongation"/>
</dbReference>
<dbReference type="Reactome" id="R-BTA-5419276">
    <property type="pathway name" value="Mitochondrial translation termination"/>
</dbReference>
<dbReference type="Proteomes" id="UP000009136">
    <property type="component" value="Chromosome 11"/>
</dbReference>
<dbReference type="Bgee" id="ENSBTAG00000006482">
    <property type="expression patterns" value="Expressed in infraspinatus muscle and 107 other cell types or tissues"/>
</dbReference>
<dbReference type="GO" id="GO:0005743">
    <property type="term" value="C:mitochondrial inner membrane"/>
    <property type="evidence" value="ECO:0000304"/>
    <property type="project" value="Reactome"/>
</dbReference>
<dbReference type="GO" id="GO:0005739">
    <property type="term" value="C:mitochondrion"/>
    <property type="evidence" value="ECO:0000250"/>
    <property type="project" value="UniProtKB"/>
</dbReference>
<dbReference type="GO" id="GO:1990904">
    <property type="term" value="C:ribonucleoprotein complex"/>
    <property type="evidence" value="ECO:0007669"/>
    <property type="project" value="UniProtKB-KW"/>
</dbReference>
<dbReference type="GO" id="GO:0005840">
    <property type="term" value="C:ribosome"/>
    <property type="evidence" value="ECO:0007669"/>
    <property type="project" value="UniProtKB-KW"/>
</dbReference>
<dbReference type="GO" id="GO:0043024">
    <property type="term" value="F:ribosomal small subunit binding"/>
    <property type="evidence" value="ECO:0000250"/>
    <property type="project" value="UniProtKB"/>
</dbReference>
<dbReference type="GO" id="GO:0019843">
    <property type="term" value="F:rRNA binding"/>
    <property type="evidence" value="ECO:0000250"/>
    <property type="project" value="UniProtKB"/>
</dbReference>
<dbReference type="GO" id="GO:0032543">
    <property type="term" value="P:mitochondrial translation"/>
    <property type="evidence" value="ECO:0000250"/>
    <property type="project" value="UniProtKB"/>
</dbReference>
<dbReference type="GO" id="GO:0006417">
    <property type="term" value="P:regulation of translation"/>
    <property type="evidence" value="ECO:0007669"/>
    <property type="project" value="UniProtKB-KW"/>
</dbReference>
<dbReference type="FunFam" id="1.25.40.10:FF:000420">
    <property type="entry name" value="Pentatricopeptide repeat domain-containing protein 3, mitochondrial"/>
    <property type="match status" value="1"/>
</dbReference>
<dbReference type="FunFam" id="1.25.40.10:FF:000457">
    <property type="entry name" value="Pentatricopeptide repeat domain-containing protein 3, mitochondrial"/>
    <property type="match status" value="1"/>
</dbReference>
<dbReference type="Gene3D" id="1.25.40.10">
    <property type="entry name" value="Tetratricopeptide repeat domain"/>
    <property type="match status" value="2"/>
</dbReference>
<dbReference type="InterPro" id="IPR002885">
    <property type="entry name" value="Pentatricopeptide_rpt"/>
</dbReference>
<dbReference type="InterPro" id="IPR037387">
    <property type="entry name" value="PTCD3"/>
</dbReference>
<dbReference type="InterPro" id="IPR055063">
    <property type="entry name" value="Rib_mS39_PPR"/>
</dbReference>
<dbReference type="InterPro" id="IPR011990">
    <property type="entry name" value="TPR-like_helical_dom_sf"/>
</dbReference>
<dbReference type="PANTHER" id="PTHR16276">
    <property type="entry name" value="PENTATRICOPEPTIDE REPEAT DOMAIN-CONTAINING PROTEIN 3"/>
    <property type="match status" value="1"/>
</dbReference>
<dbReference type="PANTHER" id="PTHR16276:SF1">
    <property type="entry name" value="SMALL RIBOSOMAL SUBUNIT PROTEIN MS39"/>
    <property type="match status" value="1"/>
</dbReference>
<dbReference type="Pfam" id="PF13812">
    <property type="entry name" value="PPR_3"/>
    <property type="match status" value="1"/>
</dbReference>
<dbReference type="Pfam" id="PF22330">
    <property type="entry name" value="Rib_mS39_PPR"/>
    <property type="match status" value="1"/>
</dbReference>
<dbReference type="PROSITE" id="PS51375">
    <property type="entry name" value="PPR"/>
    <property type="match status" value="4"/>
</dbReference>
<sequence>MASVASARWLRVSCGLCVPLTARRAGPCGRTPSSRFYSGSAAVPKDEGADIAGTEEVVIPKKKTWDKVAVLQALASTVHRDTTAAPYAFQDDPYLIPTSSVESHSFLLAKKSGENAAKFIINSYPKYFQKDIAEPHIPCLMPEYFEPQIEEISEAALQERIKLKKVKASVDIFDQLLQAGTTVSLETTNSLLDLLCYYGNQEPSTNYNFQQHEQTEELEEAEEGDNMKSKKKAGHQLGVTWRARNHAERIFALMPEKNAHSYCTMIRGMVKHRAHTQALSMYTELLNNRLRADVHTFNSLIEATALVVNAKFEEKWNNILDLLKQMVAQNVKPNLQTFNTILKCLRRFYAFGKLPALQTFREMKAIGIEPSLATYHHIIQLFYQHESPSKGSSLIIYDIMDEITGKTFSPKDPDDDMFFQSAMRVCSSLRDLELAYQVHGLLNTGDNRKFIGPDPRRNFYYSKFFSLLCLMEQIDVTLKWYKDLIPSVFFPHSQTLIDLLQALDVANRLEMIPQIWKDSKEYGHTFRSDLKEEILMLMARDQHPPELQAAFADCAADIKSTYESQDARQTASEWPANSLNYIAILFLRAGRTQEAWKMLGLFRKHNKIPRNELLNEFMDSAKASSSPAQAVEVVKLANSFSLPICEGLTQRLTADFTLSQEQKEALGDLTALTSDSESDSDSDTSKDK</sequence>
<protein>
    <recommendedName>
        <fullName evidence="5">Small ribosomal subunit protein mS39</fullName>
    </recommendedName>
    <alternativeName>
        <fullName>28S ribosomal protein S39, mitochondrial</fullName>
        <shortName>MRP-S39</shortName>
    </alternativeName>
    <alternativeName>
        <fullName>Pentatricopeptide repeat domain-containing protein 3, mitochondrial</fullName>
    </alternativeName>
</protein>